<reference key="1">
    <citation type="journal article" date="2009" name="J. Bacteriol.">
        <title>Genomic sequencing reveals regulatory mutations and recombinational events in the widely used MC4100 lineage of Escherichia coli K-12.</title>
        <authorList>
            <person name="Ferenci T."/>
            <person name="Zhou Z."/>
            <person name="Betteridge T."/>
            <person name="Ren Y."/>
            <person name="Liu Y."/>
            <person name="Feng L."/>
            <person name="Reeves P.R."/>
            <person name="Wang L."/>
        </authorList>
    </citation>
    <scope>NUCLEOTIDE SEQUENCE [LARGE SCALE GENOMIC DNA]</scope>
    <source>
        <strain>K12 / MC4100 / BW2952</strain>
    </source>
</reference>
<name>FLIT_ECOBW</name>
<proteinExistence type="inferred from homology"/>
<sequence>MNHAPHLYFAWQQLVEKSQLMLRLATEEQWDELIASEMAYVNAVQEIAHLTEEVDPSTTMQEQLRPMLRLILDNESKVKQLLQIRMDELAKLVGQSSVQKSVLSAYGDQGGFVLAPQDNLF</sequence>
<keyword id="KW-1005">Bacterial flagellum biogenesis</keyword>
<keyword id="KW-0143">Chaperone</keyword>
<keyword id="KW-0963">Cytoplasm</keyword>
<keyword id="KW-0678">Repressor</keyword>
<keyword id="KW-0804">Transcription</keyword>
<keyword id="KW-0805">Transcription regulation</keyword>
<feature type="chain" id="PRO_1000213756" description="Flagellar protein FliT">
    <location>
        <begin position="1"/>
        <end position="121"/>
    </location>
</feature>
<feature type="region of interest" description="Required for homodimerization" evidence="1">
    <location>
        <begin position="1"/>
        <end position="50"/>
    </location>
</feature>
<feature type="region of interest" description="FliD binding" evidence="1">
    <location>
        <begin position="60"/>
        <end position="98"/>
    </location>
</feature>
<gene>
    <name evidence="1" type="primary">fliT</name>
    <name type="ordered locus">BWG_1735</name>
</gene>
<organism>
    <name type="scientific">Escherichia coli (strain K12 / MC4100 / BW2952)</name>
    <dbReference type="NCBI Taxonomy" id="595496"/>
    <lineage>
        <taxon>Bacteria</taxon>
        <taxon>Pseudomonadati</taxon>
        <taxon>Pseudomonadota</taxon>
        <taxon>Gammaproteobacteria</taxon>
        <taxon>Enterobacterales</taxon>
        <taxon>Enterobacteriaceae</taxon>
        <taxon>Escherichia</taxon>
    </lineage>
</organism>
<accession>C4ZQK4</accession>
<dbReference type="EMBL" id="CP001396">
    <property type="protein sequence ID" value="ACR64196.1"/>
    <property type="molecule type" value="Genomic_DNA"/>
</dbReference>
<dbReference type="RefSeq" id="WP_001015033.1">
    <property type="nucleotide sequence ID" value="NC_012759.1"/>
</dbReference>
<dbReference type="SMR" id="C4ZQK4"/>
<dbReference type="GeneID" id="75172048"/>
<dbReference type="KEGG" id="ebw:BWG_1735"/>
<dbReference type="HOGENOM" id="CLU_155793_1_1_6"/>
<dbReference type="GO" id="GO:0005829">
    <property type="term" value="C:cytosol"/>
    <property type="evidence" value="ECO:0007669"/>
    <property type="project" value="UniProtKB-SubCell"/>
</dbReference>
<dbReference type="GO" id="GO:0044781">
    <property type="term" value="P:bacterial-type flagellum organization"/>
    <property type="evidence" value="ECO:0007669"/>
    <property type="project" value="UniProtKB-KW"/>
</dbReference>
<dbReference type="GO" id="GO:1902209">
    <property type="term" value="P:negative regulation of bacterial-type flagellum assembly"/>
    <property type="evidence" value="ECO:0007669"/>
    <property type="project" value="UniProtKB-UniRule"/>
</dbReference>
<dbReference type="GO" id="GO:0006457">
    <property type="term" value="P:protein folding"/>
    <property type="evidence" value="ECO:0007669"/>
    <property type="project" value="UniProtKB-UniRule"/>
</dbReference>
<dbReference type="FunFam" id="1.20.58.380:FF:000001">
    <property type="entry name" value="Flagellar protein FliT"/>
    <property type="match status" value="1"/>
</dbReference>
<dbReference type="Gene3D" id="1.20.58.380">
    <property type="entry name" value="Flagellar protein flit"/>
    <property type="match status" value="1"/>
</dbReference>
<dbReference type="HAMAP" id="MF_01180">
    <property type="entry name" value="FliT"/>
    <property type="match status" value="1"/>
</dbReference>
<dbReference type="InterPro" id="IPR008622">
    <property type="entry name" value="FliT"/>
</dbReference>
<dbReference type="NCBIfam" id="NF007836">
    <property type="entry name" value="PRK10548.1"/>
    <property type="match status" value="1"/>
</dbReference>
<dbReference type="Pfam" id="PF05400">
    <property type="entry name" value="FliT"/>
    <property type="match status" value="1"/>
</dbReference>
<protein>
    <recommendedName>
        <fullName evidence="1">Flagellar protein FliT</fullName>
    </recommendedName>
</protein>
<comment type="function">
    <text evidence="1">Dual-function protein that regulates the transcription of class 2 flagellar operons and that also acts as an export chaperone for the filament-capping protein FliD. As a transcriptional regulator, acts as an anti-FlhDC factor; it directly binds FlhC, thus inhibiting the binding of the FlhC/FlhD complex to class 2 promoters, resulting in decreased expression of class 2 flagellar operons. As a chaperone, effects FliD transition to the membrane by preventing its premature polymerization, and by directing it to the export apparatus.</text>
</comment>
<comment type="subunit">
    <text evidence="1">Homodimer. Interacts with FliD and FlhC.</text>
</comment>
<comment type="subcellular location">
    <subcellularLocation>
        <location evidence="1">Cytoplasm</location>
        <location evidence="1">Cytosol</location>
    </subcellularLocation>
</comment>
<comment type="similarity">
    <text evidence="1">Belongs to the FliT family.</text>
</comment>
<evidence type="ECO:0000255" key="1">
    <source>
        <dbReference type="HAMAP-Rule" id="MF_01180"/>
    </source>
</evidence>